<gene>
    <name evidence="1" type="primary">miaB</name>
    <name type="ordered locus">UTI89_C0659</name>
</gene>
<reference key="1">
    <citation type="journal article" date="2006" name="Proc. Natl. Acad. Sci. U.S.A.">
        <title>Identification of genes subject to positive selection in uropathogenic strains of Escherichia coli: a comparative genomics approach.</title>
        <authorList>
            <person name="Chen S.L."/>
            <person name="Hung C.-S."/>
            <person name="Xu J."/>
            <person name="Reigstad C.S."/>
            <person name="Magrini V."/>
            <person name="Sabo A."/>
            <person name="Blasiar D."/>
            <person name="Bieri T."/>
            <person name="Meyer R.R."/>
            <person name="Ozersky P."/>
            <person name="Armstrong J.R."/>
            <person name="Fulton R.S."/>
            <person name="Latreille J.P."/>
            <person name="Spieth J."/>
            <person name="Hooton T.M."/>
            <person name="Mardis E.R."/>
            <person name="Hultgren S.J."/>
            <person name="Gordon J.I."/>
        </authorList>
    </citation>
    <scope>NUCLEOTIDE SEQUENCE [LARGE SCALE GENOMIC DNA]</scope>
    <source>
        <strain>UTI89 / UPEC</strain>
    </source>
</reference>
<protein>
    <recommendedName>
        <fullName evidence="1">tRNA-2-methylthio-N(6)-dimethylallyladenosine synthase</fullName>
        <ecNumber evidence="1">2.8.4.3</ecNumber>
    </recommendedName>
    <alternativeName>
        <fullName evidence="1">(Dimethylallyl)adenosine tRNA methylthiotransferase MiaB</fullName>
    </alternativeName>
    <alternativeName>
        <fullName evidence="1">tRNA-i(6)A37 methylthiotransferase</fullName>
    </alternativeName>
</protein>
<feature type="chain" id="PRO_0000374286" description="tRNA-2-methylthio-N(6)-dimethylallyladenosine synthase">
    <location>
        <begin position="1"/>
        <end position="474"/>
    </location>
</feature>
<feature type="domain" description="MTTase N-terminal" evidence="1">
    <location>
        <begin position="3"/>
        <end position="120"/>
    </location>
</feature>
<feature type="domain" description="Radical SAM core" evidence="2">
    <location>
        <begin position="143"/>
        <end position="375"/>
    </location>
</feature>
<feature type="domain" description="TRAM" evidence="1">
    <location>
        <begin position="378"/>
        <end position="441"/>
    </location>
</feature>
<feature type="binding site" evidence="1">
    <location>
        <position position="12"/>
    </location>
    <ligand>
        <name>[4Fe-4S] cluster</name>
        <dbReference type="ChEBI" id="CHEBI:49883"/>
        <label>1</label>
    </ligand>
</feature>
<feature type="binding site" evidence="1">
    <location>
        <position position="49"/>
    </location>
    <ligand>
        <name>[4Fe-4S] cluster</name>
        <dbReference type="ChEBI" id="CHEBI:49883"/>
        <label>1</label>
    </ligand>
</feature>
<feature type="binding site" evidence="1">
    <location>
        <position position="83"/>
    </location>
    <ligand>
        <name>[4Fe-4S] cluster</name>
        <dbReference type="ChEBI" id="CHEBI:49883"/>
        <label>1</label>
    </ligand>
</feature>
<feature type="binding site" evidence="1">
    <location>
        <position position="157"/>
    </location>
    <ligand>
        <name>[4Fe-4S] cluster</name>
        <dbReference type="ChEBI" id="CHEBI:49883"/>
        <label>2</label>
        <note>4Fe-4S-S-AdoMet</note>
    </ligand>
</feature>
<feature type="binding site" evidence="1">
    <location>
        <position position="161"/>
    </location>
    <ligand>
        <name>[4Fe-4S] cluster</name>
        <dbReference type="ChEBI" id="CHEBI:49883"/>
        <label>2</label>
        <note>4Fe-4S-S-AdoMet</note>
    </ligand>
</feature>
<feature type="binding site" evidence="1">
    <location>
        <position position="164"/>
    </location>
    <ligand>
        <name>[4Fe-4S] cluster</name>
        <dbReference type="ChEBI" id="CHEBI:49883"/>
        <label>2</label>
        <note>4Fe-4S-S-AdoMet</note>
    </ligand>
</feature>
<dbReference type="EC" id="2.8.4.3" evidence="1"/>
<dbReference type="EMBL" id="CP000243">
    <property type="protein sequence ID" value="ABE06159.1"/>
    <property type="molecule type" value="Genomic_DNA"/>
</dbReference>
<dbReference type="RefSeq" id="WP_000162737.1">
    <property type="nucleotide sequence ID" value="NZ_CP064825.1"/>
</dbReference>
<dbReference type="SMR" id="Q1REQ5"/>
<dbReference type="KEGG" id="eci:UTI89_C0659"/>
<dbReference type="HOGENOM" id="CLU_018697_2_0_6"/>
<dbReference type="Proteomes" id="UP000001952">
    <property type="component" value="Chromosome"/>
</dbReference>
<dbReference type="GO" id="GO:0005829">
    <property type="term" value="C:cytosol"/>
    <property type="evidence" value="ECO:0007669"/>
    <property type="project" value="TreeGrafter"/>
</dbReference>
<dbReference type="GO" id="GO:0051539">
    <property type="term" value="F:4 iron, 4 sulfur cluster binding"/>
    <property type="evidence" value="ECO:0007669"/>
    <property type="project" value="UniProtKB-UniRule"/>
</dbReference>
<dbReference type="GO" id="GO:0046872">
    <property type="term" value="F:metal ion binding"/>
    <property type="evidence" value="ECO:0007669"/>
    <property type="project" value="UniProtKB-KW"/>
</dbReference>
<dbReference type="GO" id="GO:0035597">
    <property type="term" value="F:N6-isopentenyladenosine methylthiotransferase activity"/>
    <property type="evidence" value="ECO:0007669"/>
    <property type="project" value="TreeGrafter"/>
</dbReference>
<dbReference type="CDD" id="cd01335">
    <property type="entry name" value="Radical_SAM"/>
    <property type="match status" value="1"/>
</dbReference>
<dbReference type="FunFam" id="3.40.50.12160:FF:000001">
    <property type="entry name" value="tRNA-2-methylthio-N(6)-dimethylallyladenosine synthase"/>
    <property type="match status" value="1"/>
</dbReference>
<dbReference type="FunFam" id="3.80.30.20:FF:000001">
    <property type="entry name" value="tRNA-2-methylthio-N(6)-dimethylallyladenosine synthase 2"/>
    <property type="match status" value="1"/>
</dbReference>
<dbReference type="Gene3D" id="3.40.50.12160">
    <property type="entry name" value="Methylthiotransferase, N-terminal domain"/>
    <property type="match status" value="1"/>
</dbReference>
<dbReference type="Gene3D" id="3.80.30.20">
    <property type="entry name" value="tm_1862 like domain"/>
    <property type="match status" value="1"/>
</dbReference>
<dbReference type="HAMAP" id="MF_01864">
    <property type="entry name" value="tRNA_metthiotr_MiaB"/>
    <property type="match status" value="1"/>
</dbReference>
<dbReference type="InterPro" id="IPR006638">
    <property type="entry name" value="Elp3/MiaA/NifB-like_rSAM"/>
</dbReference>
<dbReference type="InterPro" id="IPR005839">
    <property type="entry name" value="Methylthiotransferase"/>
</dbReference>
<dbReference type="InterPro" id="IPR020612">
    <property type="entry name" value="Methylthiotransferase_CS"/>
</dbReference>
<dbReference type="InterPro" id="IPR013848">
    <property type="entry name" value="Methylthiotransferase_N"/>
</dbReference>
<dbReference type="InterPro" id="IPR038135">
    <property type="entry name" value="Methylthiotransferase_N_sf"/>
</dbReference>
<dbReference type="InterPro" id="IPR006463">
    <property type="entry name" value="MiaB_methiolase"/>
</dbReference>
<dbReference type="InterPro" id="IPR007197">
    <property type="entry name" value="rSAM"/>
</dbReference>
<dbReference type="InterPro" id="IPR023404">
    <property type="entry name" value="rSAM_horseshoe"/>
</dbReference>
<dbReference type="InterPro" id="IPR002792">
    <property type="entry name" value="TRAM_dom"/>
</dbReference>
<dbReference type="NCBIfam" id="TIGR01574">
    <property type="entry name" value="miaB-methiolase"/>
    <property type="match status" value="1"/>
</dbReference>
<dbReference type="NCBIfam" id="TIGR00089">
    <property type="entry name" value="MiaB/RimO family radical SAM methylthiotransferase"/>
    <property type="match status" value="1"/>
</dbReference>
<dbReference type="PANTHER" id="PTHR43020">
    <property type="entry name" value="CDK5 REGULATORY SUBUNIT-ASSOCIATED PROTEIN 1"/>
    <property type="match status" value="1"/>
</dbReference>
<dbReference type="PANTHER" id="PTHR43020:SF2">
    <property type="entry name" value="MITOCHONDRIAL TRNA METHYLTHIOTRANSFERASE CDK5RAP1"/>
    <property type="match status" value="1"/>
</dbReference>
<dbReference type="Pfam" id="PF04055">
    <property type="entry name" value="Radical_SAM"/>
    <property type="match status" value="1"/>
</dbReference>
<dbReference type="Pfam" id="PF01938">
    <property type="entry name" value="TRAM"/>
    <property type="match status" value="1"/>
</dbReference>
<dbReference type="Pfam" id="PF00919">
    <property type="entry name" value="UPF0004"/>
    <property type="match status" value="1"/>
</dbReference>
<dbReference type="SFLD" id="SFLDF00273">
    <property type="entry name" value="(dimethylallyl)adenosine_tRNA"/>
    <property type="match status" value="1"/>
</dbReference>
<dbReference type="SFLD" id="SFLDG01082">
    <property type="entry name" value="B12-binding_domain_containing"/>
    <property type="match status" value="1"/>
</dbReference>
<dbReference type="SFLD" id="SFLDS00029">
    <property type="entry name" value="Radical_SAM"/>
    <property type="match status" value="1"/>
</dbReference>
<dbReference type="SMART" id="SM00729">
    <property type="entry name" value="Elp3"/>
    <property type="match status" value="1"/>
</dbReference>
<dbReference type="SUPFAM" id="SSF102114">
    <property type="entry name" value="Radical SAM enzymes"/>
    <property type="match status" value="1"/>
</dbReference>
<dbReference type="PROSITE" id="PS51449">
    <property type="entry name" value="MTTASE_N"/>
    <property type="match status" value="1"/>
</dbReference>
<dbReference type="PROSITE" id="PS01278">
    <property type="entry name" value="MTTASE_RADICAL"/>
    <property type="match status" value="1"/>
</dbReference>
<dbReference type="PROSITE" id="PS51918">
    <property type="entry name" value="RADICAL_SAM"/>
    <property type="match status" value="1"/>
</dbReference>
<dbReference type="PROSITE" id="PS50926">
    <property type="entry name" value="TRAM"/>
    <property type="match status" value="1"/>
</dbReference>
<sequence length="474" mass="53649">MTKKLHIKTWGCQMNEYDSSKMADLLDATHGYQLTDVAEEADVLLLNTCSIREKAQEKVFHQLGRWKLLKEKNPDLIIGVGGCVASQEGEHIRQRAHYVDIIFGPQTLHRLPEMINSVRGDRSPVVDISFPEIEKFDRLPEPRAEGPTAFVSIMEGCNKYCTYCVVPYTRGEEVSRPSDDILFEIAQLAAQGVREVNLLGQNVNAWRGENYDGTTGSFADLLRLVAAIDGIDRIRFTTSHPIEFTDDIIEVYRDTPELVSFLHLPVQSGSDRILNLMGRTHTALEYKAIIRKLRAARPDIQISSDFIVGFPGETTDDFEKTMKLIADVNFDMSYSFIFSARPGTPAADMVDDVPEEEKKQRLYILQERINQQAMAWSRRMLGTTQRILVEGTSRKSIMELSGRTENNRVVNFEGTPDMIGKFVDVEITDVYPNSLRGKVVRTEDEMGLRVAETPESVIARTRKENDLGVGYYQP</sequence>
<evidence type="ECO:0000255" key="1">
    <source>
        <dbReference type="HAMAP-Rule" id="MF_01864"/>
    </source>
</evidence>
<evidence type="ECO:0000255" key="2">
    <source>
        <dbReference type="PROSITE-ProRule" id="PRU01266"/>
    </source>
</evidence>
<proteinExistence type="inferred from homology"/>
<comment type="function">
    <text evidence="1">Catalyzes the methylthiolation of N6-(dimethylallyl)adenosine (i(6)A), leading to the formation of 2-methylthio-N6-(dimethylallyl)adenosine (ms(2)i(6)A) at position 37 in tRNAs that read codons beginning with uridine.</text>
</comment>
<comment type="catalytic activity">
    <reaction evidence="1">
        <text>N(6)-dimethylallyladenosine(37) in tRNA + (sulfur carrier)-SH + AH2 + 2 S-adenosyl-L-methionine = 2-methylsulfanyl-N(6)-dimethylallyladenosine(37) in tRNA + (sulfur carrier)-H + 5'-deoxyadenosine + L-methionine + A + S-adenosyl-L-homocysteine + 2 H(+)</text>
        <dbReference type="Rhea" id="RHEA:37067"/>
        <dbReference type="Rhea" id="RHEA-COMP:10375"/>
        <dbReference type="Rhea" id="RHEA-COMP:10376"/>
        <dbReference type="Rhea" id="RHEA-COMP:14737"/>
        <dbReference type="Rhea" id="RHEA-COMP:14739"/>
        <dbReference type="ChEBI" id="CHEBI:13193"/>
        <dbReference type="ChEBI" id="CHEBI:15378"/>
        <dbReference type="ChEBI" id="CHEBI:17319"/>
        <dbReference type="ChEBI" id="CHEBI:17499"/>
        <dbReference type="ChEBI" id="CHEBI:29917"/>
        <dbReference type="ChEBI" id="CHEBI:57844"/>
        <dbReference type="ChEBI" id="CHEBI:57856"/>
        <dbReference type="ChEBI" id="CHEBI:59789"/>
        <dbReference type="ChEBI" id="CHEBI:64428"/>
        <dbReference type="ChEBI" id="CHEBI:74415"/>
        <dbReference type="ChEBI" id="CHEBI:74417"/>
        <dbReference type="EC" id="2.8.4.3"/>
    </reaction>
</comment>
<comment type="cofactor">
    <cofactor evidence="1">
        <name>[4Fe-4S] cluster</name>
        <dbReference type="ChEBI" id="CHEBI:49883"/>
    </cofactor>
    <text evidence="1">Binds 2 [4Fe-4S] clusters. One cluster is coordinated with 3 cysteines and an exchangeable S-adenosyl-L-methionine.</text>
</comment>
<comment type="subunit">
    <text evidence="1">Monomer.</text>
</comment>
<comment type="subcellular location">
    <subcellularLocation>
        <location evidence="1">Cytoplasm</location>
    </subcellularLocation>
</comment>
<comment type="similarity">
    <text evidence="1">Belongs to the methylthiotransferase family. MiaB subfamily.</text>
</comment>
<keyword id="KW-0004">4Fe-4S</keyword>
<keyword id="KW-0963">Cytoplasm</keyword>
<keyword id="KW-0408">Iron</keyword>
<keyword id="KW-0411">Iron-sulfur</keyword>
<keyword id="KW-0479">Metal-binding</keyword>
<keyword id="KW-0949">S-adenosyl-L-methionine</keyword>
<keyword id="KW-0808">Transferase</keyword>
<keyword id="KW-0819">tRNA processing</keyword>
<accession>Q1REQ5</accession>
<name>MIAB_ECOUT</name>
<organism>
    <name type="scientific">Escherichia coli (strain UTI89 / UPEC)</name>
    <dbReference type="NCBI Taxonomy" id="364106"/>
    <lineage>
        <taxon>Bacteria</taxon>
        <taxon>Pseudomonadati</taxon>
        <taxon>Pseudomonadota</taxon>
        <taxon>Gammaproteobacteria</taxon>
        <taxon>Enterobacterales</taxon>
        <taxon>Enterobacteriaceae</taxon>
        <taxon>Escherichia</taxon>
    </lineage>
</organism>